<proteinExistence type="evidence at protein level"/>
<protein>
    <recommendedName>
        <fullName>Cecropin-B type 1</fullName>
        <shortName>Cecropin-B1</shortName>
    </recommendedName>
    <component>
        <recommendedName>
            <fullName>Cecropin-B</fullName>
        </recommendedName>
        <alternativeName>
            <fullName>AalCecB</fullName>
        </alternativeName>
    </component>
    <component>
        <recommendedName>
            <fullName>Cecropin-B amidated isoform</fullName>
        </recommendedName>
    </component>
</protein>
<organism>
    <name type="scientific">Aedes albopictus</name>
    <name type="common">Asian tiger mosquito</name>
    <name type="synonym">Stegomyia albopicta</name>
    <dbReference type="NCBI Taxonomy" id="7160"/>
    <lineage>
        <taxon>Eukaryota</taxon>
        <taxon>Metazoa</taxon>
        <taxon>Ecdysozoa</taxon>
        <taxon>Arthropoda</taxon>
        <taxon>Hexapoda</taxon>
        <taxon>Insecta</taxon>
        <taxon>Pterygota</taxon>
        <taxon>Neoptera</taxon>
        <taxon>Endopterygota</taxon>
        <taxon>Diptera</taxon>
        <taxon>Nematocera</taxon>
        <taxon>Culicoidea</taxon>
        <taxon>Culicidae</taxon>
        <taxon>Culicinae</taxon>
        <taxon>Aedini</taxon>
        <taxon>Aedes</taxon>
        <taxon>Stegomyia</taxon>
    </lineage>
</organism>
<keyword id="KW-0027">Amidation</keyword>
<keyword id="KW-0044">Antibiotic</keyword>
<keyword id="KW-0929">Antimicrobial</keyword>
<keyword id="KW-0903">Direct protein sequencing</keyword>
<keyword id="KW-0391">Immunity</keyword>
<keyword id="KW-0399">Innate immunity</keyword>
<keyword id="KW-0964">Secreted</keyword>
<keyword id="KW-0732">Signal</keyword>
<gene>
    <name type="primary">CECB1</name>
    <name type="synonym">CECB</name>
</gene>
<accession>Q9Y0Y0</accession>
<feature type="signal peptide" evidence="2">
    <location>
        <begin position="1"/>
        <end position="24"/>
    </location>
</feature>
<feature type="chain" id="PRO_0000004814" description="Cecropin-B">
    <location>
        <begin position="25"/>
        <end position="59"/>
    </location>
</feature>
<feature type="chain" id="PRO_0000004815" description="Cecropin-B amidated isoform">
    <location>
        <begin position="25"/>
        <end position="58"/>
    </location>
</feature>
<feature type="modified residue" description="Isoleucine amide" evidence="2">
    <location>
        <position position="58"/>
    </location>
</feature>
<dbReference type="EMBL" id="AF145803">
    <property type="protein sequence ID" value="AAD37702.1"/>
    <property type="molecule type" value="mRNA"/>
</dbReference>
<dbReference type="EMBL" id="AF394747">
    <property type="protein sequence ID" value="AAK81853.1"/>
    <property type="molecule type" value="Genomic_DNA"/>
</dbReference>
<dbReference type="SMR" id="Q9Y0Y0"/>
<dbReference type="Proteomes" id="UP000069940">
    <property type="component" value="Unassembled WGS sequence"/>
</dbReference>
<dbReference type="GO" id="GO:0005615">
    <property type="term" value="C:extracellular space"/>
    <property type="evidence" value="ECO:0007669"/>
    <property type="project" value="TreeGrafter"/>
</dbReference>
<dbReference type="GO" id="GO:0019731">
    <property type="term" value="P:antibacterial humoral response"/>
    <property type="evidence" value="ECO:0007669"/>
    <property type="project" value="InterPro"/>
</dbReference>
<dbReference type="GO" id="GO:0050829">
    <property type="term" value="P:defense response to Gram-negative bacterium"/>
    <property type="evidence" value="ECO:0007669"/>
    <property type="project" value="UniProtKB-ARBA"/>
</dbReference>
<dbReference type="GO" id="GO:0050830">
    <property type="term" value="P:defense response to Gram-positive bacterium"/>
    <property type="evidence" value="ECO:0007669"/>
    <property type="project" value="TreeGrafter"/>
</dbReference>
<dbReference type="GO" id="GO:0045087">
    <property type="term" value="P:innate immune response"/>
    <property type="evidence" value="ECO:0007669"/>
    <property type="project" value="UniProtKB-KW"/>
</dbReference>
<dbReference type="InterPro" id="IPR000875">
    <property type="entry name" value="Cecropin"/>
</dbReference>
<dbReference type="InterPro" id="IPR020400">
    <property type="entry name" value="Cecropin_insect"/>
</dbReference>
<dbReference type="PANTHER" id="PTHR38329">
    <property type="entry name" value="CECROPIN-A1-RELATED"/>
    <property type="match status" value="1"/>
</dbReference>
<dbReference type="PANTHER" id="PTHR38329:SF1">
    <property type="entry name" value="CECROPIN-A1-RELATED"/>
    <property type="match status" value="1"/>
</dbReference>
<dbReference type="Pfam" id="PF00272">
    <property type="entry name" value="Cecropin"/>
    <property type="match status" value="1"/>
</dbReference>
<evidence type="ECO:0000250" key="1"/>
<evidence type="ECO:0000269" key="2">
    <source>
    </source>
</evidence>
<evidence type="ECO:0000305" key="3"/>
<sequence length="60" mass="6372">MNFNKLFALVLLIGLVLLTGQTEAGGLKKLGKKLEGVGKRVFKASEKALPVLTGYKAIGK</sequence>
<reference key="1">
    <citation type="journal article" date="1999" name="FEBS Lett.">
        <title>Cloning and expression of three cecropin cDNAs from a mosquito cell line.</title>
        <authorList>
            <person name="Sun D."/>
            <person name="Eccleston E.D."/>
            <person name="Fallon A.M."/>
        </authorList>
    </citation>
    <scope>NUCLEOTIDE SEQUENCE [MRNA]</scope>
    <scope>PROTEIN SEQUENCE OF 25-59</scope>
    <scope>DEVELOPMENTAL STAGE</scope>
    <scope>MASS SPECTROMETRY</scope>
    <scope>AMIDATION AT ILE-58</scope>
</reference>
<reference key="2">
    <citation type="submission" date="2001-06" db="EMBL/GenBank/DDBJ databases">
        <title>Characterization of genomic DNA encoding mosquito cecropins.</title>
        <authorList>
            <person name="Sun D."/>
            <person name="Fallon A.M."/>
        </authorList>
    </citation>
    <scope>NUCLEOTIDE SEQUENCE [GENOMIC DNA]</scope>
</reference>
<name>CECB1_AEDAL</name>
<comment type="function">
    <text evidence="1">Cecropins have lytic and antibacterial activity against several Gram-positive and Gram-negative bacteria.</text>
</comment>
<comment type="subcellular location">
    <subcellularLocation>
        <location>Secreted</location>
    </subcellularLocation>
</comment>
<comment type="developmental stage">
    <text evidence="2">Expressed within 2 hours after induction and continued to accumulate over 24 hours.</text>
</comment>
<comment type="induction">
    <text>By bacterial infection.</text>
</comment>
<comment type="mass spectrometry" mass="3642.2" method="MALDI" evidence="2">
    <molecule>Cecropin-B</molecule>
</comment>
<comment type="similarity">
    <text evidence="3">Belongs to the cecropin family.</text>
</comment>